<proteinExistence type="evidence at protein level"/>
<evidence type="ECO:0000250" key="1">
    <source>
        <dbReference type="UniProtKB" id="Q9CA45"/>
    </source>
</evidence>
<evidence type="ECO:0000256" key="2">
    <source>
        <dbReference type="SAM" id="MobiDB-lite"/>
    </source>
</evidence>
<evidence type="ECO:0000269" key="3">
    <source>
    </source>
</evidence>
<evidence type="ECO:0000269" key="4">
    <source>
    </source>
</evidence>
<evidence type="ECO:0000303" key="5">
    <source>
    </source>
</evidence>
<evidence type="ECO:0000305" key="6"/>
<evidence type="ECO:0000305" key="7">
    <source>
    </source>
</evidence>
<evidence type="ECO:0000312" key="8">
    <source>
        <dbReference type="Araport" id="AT1G26210"/>
    </source>
</evidence>
<evidence type="ECO:0000312" key="9">
    <source>
        <dbReference type="EMBL" id="AAG50669.1"/>
    </source>
</evidence>
<accession>Q67YG7</accession>
<accession>Q681A7</accession>
<accession>Q8LAZ9</accession>
<accession>Q9C665</accession>
<keyword id="KW-0025">Alternative splicing</keyword>
<keyword id="KW-0203">Cytokinin biosynthesis</keyword>
<keyword id="KW-0932">Cytokinin signaling pathway</keyword>
<keyword id="KW-0963">Cytoplasm</keyword>
<keyword id="KW-0539">Nucleus</keyword>
<keyword id="KW-1185">Reference proteome</keyword>
<gene>
    <name evidence="5" type="primary">SOFL1</name>
    <name evidence="8" type="ordered locus">At1g26210</name>
    <name evidence="9" type="ORF">F28B23.12</name>
</gene>
<sequence>MESPRNHGGSEEEEYSSCESGWTMYIEDAFHGNDQSSVVVDDDDDDTQVKEADDGYENDDGDTSDDGGDEESDDSMASDASSGPSNQLPKHINKHAARKNGSKQVYLQKRQHTEKTISNEGEKSDLKARTRTSAASRVQSRGKVSKTK</sequence>
<dbReference type="EMBL" id="AC079829">
    <property type="protein sequence ID" value="AAG50669.1"/>
    <property type="status" value="ALT_SEQ"/>
    <property type="molecule type" value="Genomic_DNA"/>
</dbReference>
<dbReference type="EMBL" id="CP002684">
    <property type="protein sequence ID" value="AEE30661.1"/>
    <property type="molecule type" value="Genomic_DNA"/>
</dbReference>
<dbReference type="EMBL" id="AK175479">
    <property type="protein sequence ID" value="BAD43242.1"/>
    <property type="molecule type" value="mRNA"/>
</dbReference>
<dbReference type="EMBL" id="AK175710">
    <property type="protein sequence ID" value="BAD43473.1"/>
    <property type="molecule type" value="mRNA"/>
</dbReference>
<dbReference type="EMBL" id="AK176501">
    <property type="protein sequence ID" value="BAD44264.1"/>
    <property type="molecule type" value="mRNA"/>
</dbReference>
<dbReference type="EMBL" id="BT024679">
    <property type="protein sequence ID" value="ABD57504.1"/>
    <property type="molecule type" value="mRNA"/>
</dbReference>
<dbReference type="EMBL" id="AY087508">
    <property type="protein sequence ID" value="AAM65051.1"/>
    <property type="molecule type" value="mRNA"/>
</dbReference>
<dbReference type="PIR" id="C86388">
    <property type="entry name" value="C86388"/>
</dbReference>
<dbReference type="RefSeq" id="NP_564241.1">
    <molecule id="Q67YG7-1"/>
    <property type="nucleotide sequence ID" value="NM_102385.2"/>
</dbReference>
<dbReference type="STRING" id="3702.Q67YG7"/>
<dbReference type="PaxDb" id="3702-AT1G26210.1"/>
<dbReference type="EnsemblPlants" id="AT1G26210.1">
    <molecule id="Q67YG7-1"/>
    <property type="protein sequence ID" value="AT1G26210.1"/>
    <property type="gene ID" value="AT1G26210"/>
</dbReference>
<dbReference type="GeneID" id="839162"/>
<dbReference type="Gramene" id="AT1G26210.1">
    <molecule id="Q67YG7-1"/>
    <property type="protein sequence ID" value="AT1G26210.1"/>
    <property type="gene ID" value="AT1G26210"/>
</dbReference>
<dbReference type="KEGG" id="ath:AT1G26210"/>
<dbReference type="Araport" id="AT1G26210"/>
<dbReference type="TAIR" id="AT1G26210">
    <property type="gene designation" value="SOFL1"/>
</dbReference>
<dbReference type="HOGENOM" id="CLU_1858027_0_0_1"/>
<dbReference type="InParanoid" id="Q67YG7"/>
<dbReference type="OMA" id="DAFHGND"/>
<dbReference type="PhylomeDB" id="Q67YG7"/>
<dbReference type="PRO" id="PR:Q67YG7"/>
<dbReference type="Proteomes" id="UP000006548">
    <property type="component" value="Chromosome 1"/>
</dbReference>
<dbReference type="ExpressionAtlas" id="Q67YG7">
    <property type="expression patterns" value="differential"/>
</dbReference>
<dbReference type="GO" id="GO:0005737">
    <property type="term" value="C:cytoplasm"/>
    <property type="evidence" value="ECO:0000314"/>
    <property type="project" value="UniProtKB"/>
</dbReference>
<dbReference type="GO" id="GO:0005634">
    <property type="term" value="C:nucleus"/>
    <property type="evidence" value="ECO:0000314"/>
    <property type="project" value="UniProtKB"/>
</dbReference>
<dbReference type="GO" id="GO:0009691">
    <property type="term" value="P:cytokinin biosynthetic process"/>
    <property type="evidence" value="ECO:0007669"/>
    <property type="project" value="UniProtKB-KW"/>
</dbReference>
<dbReference type="GO" id="GO:0009690">
    <property type="term" value="P:cytokinin metabolic process"/>
    <property type="evidence" value="ECO:0000315"/>
    <property type="project" value="TAIR"/>
</dbReference>
<dbReference type="GO" id="GO:0009736">
    <property type="term" value="P:cytokinin-activated signaling pathway"/>
    <property type="evidence" value="ECO:0000315"/>
    <property type="project" value="UniProtKB"/>
</dbReference>
<dbReference type="InterPro" id="IPR044670">
    <property type="entry name" value="SOFL"/>
</dbReference>
<dbReference type="PANTHER" id="PTHR33347">
    <property type="entry name" value="OSJNBA0091C07.3 PROTEIN"/>
    <property type="match status" value="1"/>
</dbReference>
<dbReference type="PANTHER" id="PTHR33347:SF31">
    <property type="entry name" value="PROTEIN SOB FIVE-LIKE 1"/>
    <property type="match status" value="1"/>
</dbReference>
<name>SOFL1_ARATH</name>
<protein>
    <recommendedName>
        <fullName evidence="5">Protein SOB FIVE-LIKE 1</fullName>
        <shortName evidence="5">AtSOFL1</shortName>
    </recommendedName>
</protein>
<reference key="1">
    <citation type="journal article" date="2000" name="Nature">
        <title>Sequence and analysis of chromosome 1 of the plant Arabidopsis thaliana.</title>
        <authorList>
            <person name="Theologis A."/>
            <person name="Ecker J.R."/>
            <person name="Palm C.J."/>
            <person name="Federspiel N.A."/>
            <person name="Kaul S."/>
            <person name="White O."/>
            <person name="Alonso J."/>
            <person name="Altafi H."/>
            <person name="Araujo R."/>
            <person name="Bowman C.L."/>
            <person name="Brooks S.Y."/>
            <person name="Buehler E."/>
            <person name="Chan A."/>
            <person name="Chao Q."/>
            <person name="Chen H."/>
            <person name="Cheuk R.F."/>
            <person name="Chin C.W."/>
            <person name="Chung M.K."/>
            <person name="Conn L."/>
            <person name="Conway A.B."/>
            <person name="Conway A.R."/>
            <person name="Creasy T.H."/>
            <person name="Dewar K."/>
            <person name="Dunn P."/>
            <person name="Etgu P."/>
            <person name="Feldblyum T.V."/>
            <person name="Feng J.-D."/>
            <person name="Fong B."/>
            <person name="Fujii C.Y."/>
            <person name="Gill J.E."/>
            <person name="Goldsmith A.D."/>
            <person name="Haas B."/>
            <person name="Hansen N.F."/>
            <person name="Hughes B."/>
            <person name="Huizar L."/>
            <person name="Hunter J.L."/>
            <person name="Jenkins J."/>
            <person name="Johnson-Hopson C."/>
            <person name="Khan S."/>
            <person name="Khaykin E."/>
            <person name="Kim C.J."/>
            <person name="Koo H.L."/>
            <person name="Kremenetskaia I."/>
            <person name="Kurtz D.B."/>
            <person name="Kwan A."/>
            <person name="Lam B."/>
            <person name="Langin-Hooper S."/>
            <person name="Lee A."/>
            <person name="Lee J.M."/>
            <person name="Lenz C.A."/>
            <person name="Li J.H."/>
            <person name="Li Y.-P."/>
            <person name="Lin X."/>
            <person name="Liu S.X."/>
            <person name="Liu Z.A."/>
            <person name="Luros J.S."/>
            <person name="Maiti R."/>
            <person name="Marziali A."/>
            <person name="Militscher J."/>
            <person name="Miranda M."/>
            <person name="Nguyen M."/>
            <person name="Nierman W.C."/>
            <person name="Osborne B.I."/>
            <person name="Pai G."/>
            <person name="Peterson J."/>
            <person name="Pham P.K."/>
            <person name="Rizzo M."/>
            <person name="Rooney T."/>
            <person name="Rowley D."/>
            <person name="Sakano H."/>
            <person name="Salzberg S.L."/>
            <person name="Schwartz J.R."/>
            <person name="Shinn P."/>
            <person name="Southwick A.M."/>
            <person name="Sun H."/>
            <person name="Tallon L.J."/>
            <person name="Tambunga G."/>
            <person name="Toriumi M.J."/>
            <person name="Town C.D."/>
            <person name="Utterback T."/>
            <person name="Van Aken S."/>
            <person name="Vaysberg M."/>
            <person name="Vysotskaia V.S."/>
            <person name="Walker M."/>
            <person name="Wu D."/>
            <person name="Yu G."/>
            <person name="Fraser C.M."/>
            <person name="Venter J.C."/>
            <person name="Davis R.W."/>
        </authorList>
    </citation>
    <scope>NUCLEOTIDE SEQUENCE [LARGE SCALE GENOMIC DNA]</scope>
    <source>
        <strain>cv. Columbia</strain>
    </source>
</reference>
<reference key="2">
    <citation type="journal article" date="2017" name="Plant J.">
        <title>Araport11: a complete reannotation of the Arabidopsis thaliana reference genome.</title>
        <authorList>
            <person name="Cheng C.Y."/>
            <person name="Krishnakumar V."/>
            <person name="Chan A.P."/>
            <person name="Thibaud-Nissen F."/>
            <person name="Schobel S."/>
            <person name="Town C.D."/>
        </authorList>
    </citation>
    <scope>GENOME REANNOTATION</scope>
    <source>
        <strain>cv. Columbia</strain>
    </source>
</reference>
<reference key="3">
    <citation type="submission" date="2004-09" db="EMBL/GenBank/DDBJ databases">
        <title>Large-scale analysis of RIKEN Arabidopsis full-length (RAFL) cDNAs.</title>
        <authorList>
            <person name="Totoki Y."/>
            <person name="Seki M."/>
            <person name="Ishida J."/>
            <person name="Nakajima M."/>
            <person name="Enju A."/>
            <person name="Kamiya A."/>
            <person name="Narusaka M."/>
            <person name="Shin-i T."/>
            <person name="Nakagawa M."/>
            <person name="Sakamoto N."/>
            <person name="Oishi K."/>
            <person name="Kohara Y."/>
            <person name="Kobayashi M."/>
            <person name="Toyoda A."/>
            <person name="Sakaki Y."/>
            <person name="Sakurai T."/>
            <person name="Iida K."/>
            <person name="Akiyama K."/>
            <person name="Satou M."/>
            <person name="Toyoda T."/>
            <person name="Konagaya A."/>
            <person name="Carninci P."/>
            <person name="Kawai J."/>
            <person name="Hayashizaki Y."/>
            <person name="Shinozaki K."/>
        </authorList>
    </citation>
    <scope>NUCLEOTIDE SEQUENCE [LARGE SCALE MRNA]</scope>
    <source>
        <strain>cv. Columbia</strain>
    </source>
</reference>
<reference key="4">
    <citation type="submission" date="2006-02" db="EMBL/GenBank/DDBJ databases">
        <title>Arabidopsis ORF clones.</title>
        <authorList>
            <person name="Kim C.J."/>
            <person name="Chen H."/>
            <person name="Shinn P."/>
            <person name="Ecker J.R."/>
        </authorList>
    </citation>
    <scope>NUCLEOTIDE SEQUENCE [LARGE SCALE MRNA]</scope>
    <source>
        <strain>cv. Columbia</strain>
    </source>
</reference>
<reference key="5">
    <citation type="submission" date="2002-03" db="EMBL/GenBank/DDBJ databases">
        <title>Full-length cDNA from Arabidopsis thaliana.</title>
        <authorList>
            <person name="Brover V.V."/>
            <person name="Troukhan M.E."/>
            <person name="Alexandrov N.A."/>
            <person name="Lu Y.-P."/>
            <person name="Flavell R.B."/>
            <person name="Feldmann K.A."/>
        </authorList>
    </citation>
    <scope>NUCLEOTIDE SEQUENCE [LARGE SCALE MRNA]</scope>
</reference>
<reference key="6">
    <citation type="journal article" date="2006" name="Plant J.">
        <title>Over-expression of SOB5 suggests the involvement of a novel plant protein in cytokinin-mediated development.</title>
        <authorList>
            <person name="Zhang J."/>
            <person name="Wrage E.L."/>
            <person name="Vankova R."/>
            <person name="Malbeck J."/>
            <person name="Neff M.M."/>
        </authorList>
    </citation>
    <scope>GENE FAMILY</scope>
    <scope>NOMENCLATURE</scope>
    <source>
        <strain>cv. Columbia</strain>
    </source>
</reference>
<reference key="7">
    <citation type="journal article" date="2009" name="PLoS ONE">
        <title>AtSOFL1 and AtSOFL2 act redundantly as positive modulators of the endogenous content of specific cytokinins in Arabidopsis.</title>
        <authorList>
            <person name="Zhang J."/>
            <person name="Vankova R."/>
            <person name="Malbeck J."/>
            <person name="Dobrev P.I."/>
            <person name="Xu Y."/>
            <person name="Chong K."/>
            <person name="Neff M.M."/>
        </authorList>
    </citation>
    <scope>FUNCTION</scope>
    <scope>TISSUE SPECIFICITY</scope>
    <scope>DEVELOPMENTAL STAGE</scope>
    <source>
        <strain>cv. Columbia</strain>
    </source>
</reference>
<reference key="8">
    <citation type="journal article" date="2018" name="G3 (Bethesda)">
        <title>Synopsis of the SOFL plant-specific gene family.</title>
        <authorList>
            <person name="Tayengwa R."/>
            <person name="Zhao J."/>
            <person name="Pierce C.F."/>
            <person name="Werner B.E."/>
            <person name="Neff M.M."/>
        </authorList>
    </citation>
    <scope>FUNCTION</scope>
    <scope>MUTAGENESIS OF THR-23 AND PRO-84</scope>
    <scope>DISRUPTION PHENOTYPE</scope>
    <scope>TISSUE SPECIFICITY</scope>
    <scope>SUBCELLULAR LOCATION</scope>
    <scope>ALTERNATIVE SPLICING</scope>
    <scope>GENE FAMILY</scope>
    <scope>NOMENCLATURE</scope>
    <source>
        <strain>cv. Columbia</strain>
    </source>
</reference>
<comment type="function">
    <text evidence="3 4">Involved in cytokinin-mediated development (PubMed:20011053, PubMed:29467189). Together with SOFL2, triggers the endogenous content of specific bioactive cytokinins derived from the biosynthetic intermediates trans-zeatin riboside monophosphate (tZRMP) and N(6)-(Delta(2)-isopentenyl)adenosine monophosphate (iPRMP) such as N-glucosides trans-zeatin 7-glucoside (tZ7G), cis-zeatin 7-glucoside (cZ7G) and N(6)-(Delta(2)-isopentenyl)adenine 7-glucoside (iP7G) (PubMed:20011053).</text>
</comment>
<comment type="subcellular location">
    <subcellularLocation>
        <location evidence="4">Cytoplasm</location>
    </subcellularLocation>
    <subcellularLocation>
        <location evidence="4">Nucleus</location>
    </subcellularLocation>
</comment>
<comment type="alternative products">
    <event type="alternative splicing"/>
    <isoform>
        <id>Q67YG7-1</id>
        <name>1</name>
        <sequence type="displayed"/>
    </isoform>
    <isoform>
        <id>Q67YG7-2</id>
        <name>2</name>
        <sequence type="not described"/>
    </isoform>
</comment>
<comment type="tissue specificity">
    <text evidence="3 4">Predominantly expressed in the vascular tissues of seedlings, developing leaves, flowers and siliques, but barely detectable in roots and stems.</text>
</comment>
<comment type="developmental stage">
    <text evidence="3">In seedlings, strong levels in the hydathode region of cotyledons as well as in the upper part of hypocotyls and weak content in the vascular tissue of cotyledons (PubMed:20011053). In developing leaves, strongly expressed in the midrib of leaf veins, but weak levels in the hydathode regions (PubMed:20011053). In developing flower buds, accumulates in pistil tips and the vascular tissue of stamens and sepals (PubMed:20011053). In mature flowers, detected in the vascular bundles between the two anther locules, the central vascular cylinders of the filaments, vascular tissues of tips and bases of the pistils, and sepal vascular tissue (PubMed:20011053). Also present in tips and bases of developing siliques, and progressively restricted to the vascular tissues at the silique tips (PubMed:20011053).</text>
</comment>
<comment type="domain">
    <text evidence="1">Domains SOFL-A and SOFL-B are required for function in cytokinin-mediated development.</text>
</comment>
<comment type="disruption phenotype">
    <text evidence="3">Plants missing both SOLF1 and SOLF2 have reduced endogenous cytokinin levels and accumulate lower levels of trans-zeatin riboside monophosphate (tZRMP) and N(6)-(Delta(2)-isopentenyl)adenosine monophosphate (iPRMP), biosynthetic intermediates of bioactive cytokinins as well as decreased response to exogenous cytokinin in both callus-formation and inhibition-of-hypocotyl-elongation assays.</text>
</comment>
<comment type="similarity">
    <text evidence="6">Belongs to the SOFL plant protein family.</text>
</comment>
<comment type="sequence caution" evidence="6">
    <conflict type="erroneous gene model prediction">
        <sequence resource="EMBL-CDS" id="AAG50669"/>
    </conflict>
</comment>
<organism>
    <name type="scientific">Arabidopsis thaliana</name>
    <name type="common">Mouse-ear cress</name>
    <dbReference type="NCBI Taxonomy" id="3702"/>
    <lineage>
        <taxon>Eukaryota</taxon>
        <taxon>Viridiplantae</taxon>
        <taxon>Streptophyta</taxon>
        <taxon>Embryophyta</taxon>
        <taxon>Tracheophyta</taxon>
        <taxon>Spermatophyta</taxon>
        <taxon>Magnoliopsida</taxon>
        <taxon>eudicotyledons</taxon>
        <taxon>Gunneridae</taxon>
        <taxon>Pentapetalae</taxon>
        <taxon>rosids</taxon>
        <taxon>malvids</taxon>
        <taxon>Brassicales</taxon>
        <taxon>Brassicaceae</taxon>
        <taxon>Camelineae</taxon>
        <taxon>Arabidopsis</taxon>
    </lineage>
</organism>
<feature type="chain" id="PRO_0000450249" description="Protein SOB FIVE-LIKE 1">
    <location>
        <begin position="1"/>
        <end position="148"/>
    </location>
</feature>
<feature type="region of interest" description="Disordered" evidence="2">
    <location>
        <begin position="1"/>
        <end position="20"/>
    </location>
</feature>
<feature type="region of interest" description="Disordered" evidence="2">
    <location>
        <begin position="33"/>
        <end position="148"/>
    </location>
</feature>
<feature type="short sequence motif" description="SOFL-A" evidence="7">
    <location>
        <begin position="20"/>
        <end position="25"/>
    </location>
</feature>
<feature type="short sequence motif" description="SOFL-B" evidence="7">
    <location>
        <begin position="75"/>
        <end position="84"/>
    </location>
</feature>
<feature type="compositionally biased region" description="Basic and acidic residues" evidence="2">
    <location>
        <begin position="1"/>
        <end position="10"/>
    </location>
</feature>
<feature type="compositionally biased region" description="Acidic residues" evidence="2">
    <location>
        <begin position="54"/>
        <end position="76"/>
    </location>
</feature>
<feature type="compositionally biased region" description="Basic residues" evidence="2">
    <location>
        <begin position="91"/>
        <end position="101"/>
    </location>
</feature>
<feature type="compositionally biased region" description="Basic and acidic residues" evidence="2">
    <location>
        <begin position="111"/>
        <end position="128"/>
    </location>
</feature>
<feature type="mutagenesis site" description="Impaired function in cytokinin-mediated development; when associated with R-84." evidence="4">
    <original>T</original>
    <variation>I</variation>
    <location>
        <position position="23"/>
    </location>
</feature>
<feature type="mutagenesis site" description="Impaired function in cytokinin-mediated development; when associated with I-23." evidence="4">
    <original>P</original>
    <variation>R</variation>
    <location>
        <position position="84"/>
    </location>
</feature>
<feature type="sequence conflict" description="In Ref. 3; BAD43473." evidence="6" ref="3">
    <original>Q</original>
    <variation>L</variation>
    <location>
        <position position="35"/>
    </location>
</feature>
<feature type="sequence conflict" description="In Ref. 5; AAM65051." evidence="6" ref="5">
    <original>D</original>
    <variation>N</variation>
    <location>
        <position position="59"/>
    </location>
</feature>